<sequence>MSTAKSDIKKVTTHQLQEMKNRGEKISMLTAYDYSMAKILDAAGVDVILVGDSASNVMAGHETTLPITLDQMIYHASSVIRAINRALVVVDLPFGSYQGNSSEALRSAIRIMKESGAHAVKMEGGIEIKESVLCIISAGIPVMGHLGLMPQSIYKFGTYVVRAREEEEANKLIADAKILEESGCFGLVLEKIPASLSKTVTHQLQIPTIGIGAGPDVDGQVLVTHDLLGINNEFHPRFLRTYANLQATISTAVTSYIDDVKSKNFPNENECY</sequence>
<protein>
    <recommendedName>
        <fullName evidence="1">3-methyl-2-oxobutanoate hydroxymethyltransferase</fullName>
        <ecNumber evidence="1">2.1.2.11</ecNumber>
    </recommendedName>
    <alternativeName>
        <fullName evidence="1">Ketopantoate hydroxymethyltransferase</fullName>
        <shortName evidence="1">KPHMT</shortName>
    </alternativeName>
</protein>
<evidence type="ECO:0000255" key="1">
    <source>
        <dbReference type="HAMAP-Rule" id="MF_00156"/>
    </source>
</evidence>
<feature type="chain" id="PRO_0000297254" description="3-methyl-2-oxobutanoate hydroxymethyltransferase">
    <location>
        <begin position="1"/>
        <end position="272"/>
    </location>
</feature>
<feature type="active site" description="Proton acceptor" evidence="1">
    <location>
        <position position="190"/>
    </location>
</feature>
<feature type="binding site" evidence="1">
    <location>
        <begin position="52"/>
        <end position="53"/>
    </location>
    <ligand>
        <name>3-methyl-2-oxobutanoate</name>
        <dbReference type="ChEBI" id="CHEBI:11851"/>
    </ligand>
</feature>
<feature type="binding site" evidence="1">
    <location>
        <position position="52"/>
    </location>
    <ligand>
        <name>Mg(2+)</name>
        <dbReference type="ChEBI" id="CHEBI:18420"/>
    </ligand>
</feature>
<feature type="binding site" evidence="1">
    <location>
        <position position="91"/>
    </location>
    <ligand>
        <name>3-methyl-2-oxobutanoate</name>
        <dbReference type="ChEBI" id="CHEBI:11851"/>
    </ligand>
</feature>
<feature type="binding site" evidence="1">
    <location>
        <position position="91"/>
    </location>
    <ligand>
        <name>Mg(2+)</name>
        <dbReference type="ChEBI" id="CHEBI:18420"/>
    </ligand>
</feature>
<feature type="binding site" evidence="1">
    <location>
        <position position="121"/>
    </location>
    <ligand>
        <name>3-methyl-2-oxobutanoate</name>
        <dbReference type="ChEBI" id="CHEBI:11851"/>
    </ligand>
</feature>
<feature type="binding site" evidence="1">
    <location>
        <position position="123"/>
    </location>
    <ligand>
        <name>Mg(2+)</name>
        <dbReference type="ChEBI" id="CHEBI:18420"/>
    </ligand>
</feature>
<proteinExistence type="inferred from homology"/>
<name>PANB_CYTH3</name>
<keyword id="KW-0963">Cytoplasm</keyword>
<keyword id="KW-0460">Magnesium</keyword>
<keyword id="KW-0479">Metal-binding</keyword>
<keyword id="KW-0566">Pantothenate biosynthesis</keyword>
<keyword id="KW-1185">Reference proteome</keyword>
<keyword id="KW-0808">Transferase</keyword>
<organism>
    <name type="scientific">Cytophaga hutchinsonii (strain ATCC 33406 / DSM 1761 / CIP 103989 / NBRC 15051 / NCIMB 9469 / D465)</name>
    <dbReference type="NCBI Taxonomy" id="269798"/>
    <lineage>
        <taxon>Bacteria</taxon>
        <taxon>Pseudomonadati</taxon>
        <taxon>Bacteroidota</taxon>
        <taxon>Cytophagia</taxon>
        <taxon>Cytophagales</taxon>
        <taxon>Cytophagaceae</taxon>
        <taxon>Cytophaga</taxon>
    </lineage>
</organism>
<reference key="1">
    <citation type="journal article" date="2007" name="Appl. Environ. Microbiol.">
        <title>Genome sequence of the cellulolytic gliding bacterium Cytophaga hutchinsonii.</title>
        <authorList>
            <person name="Xie G."/>
            <person name="Bruce D.C."/>
            <person name="Challacombe J.F."/>
            <person name="Chertkov O."/>
            <person name="Detter J.C."/>
            <person name="Gilna P."/>
            <person name="Han C.S."/>
            <person name="Lucas S."/>
            <person name="Misra M."/>
            <person name="Myers G.L."/>
            <person name="Richardson P."/>
            <person name="Tapia R."/>
            <person name="Thayer N."/>
            <person name="Thompson L.S."/>
            <person name="Brettin T.S."/>
            <person name="Henrissat B."/>
            <person name="Wilson D.B."/>
            <person name="McBride M.J."/>
        </authorList>
    </citation>
    <scope>NUCLEOTIDE SEQUENCE [LARGE SCALE GENOMIC DNA]</scope>
    <source>
        <strain>ATCC 33406 / DSM 1761 / JCM 20678 / CIP 103989 / IAM 12607 / NBRC 15051 / NCIMB 9469 / D465</strain>
    </source>
</reference>
<dbReference type="EC" id="2.1.2.11" evidence="1"/>
<dbReference type="EMBL" id="CP000383">
    <property type="protein sequence ID" value="ABG60458.1"/>
    <property type="molecule type" value="Genomic_DNA"/>
</dbReference>
<dbReference type="RefSeq" id="WP_011586568.1">
    <property type="nucleotide sequence ID" value="NC_008255.1"/>
</dbReference>
<dbReference type="SMR" id="Q11Q55"/>
<dbReference type="STRING" id="269798.CHU_3218"/>
<dbReference type="KEGG" id="chu:CHU_3218"/>
<dbReference type="eggNOG" id="COG0413">
    <property type="taxonomic scope" value="Bacteria"/>
</dbReference>
<dbReference type="HOGENOM" id="CLU_036645_1_0_10"/>
<dbReference type="OrthoDB" id="9781789at2"/>
<dbReference type="UniPathway" id="UPA00028">
    <property type="reaction ID" value="UER00003"/>
</dbReference>
<dbReference type="Proteomes" id="UP000001822">
    <property type="component" value="Chromosome"/>
</dbReference>
<dbReference type="GO" id="GO:0005737">
    <property type="term" value="C:cytoplasm"/>
    <property type="evidence" value="ECO:0007669"/>
    <property type="project" value="UniProtKB-SubCell"/>
</dbReference>
<dbReference type="GO" id="GO:0003864">
    <property type="term" value="F:3-methyl-2-oxobutanoate hydroxymethyltransferase activity"/>
    <property type="evidence" value="ECO:0007669"/>
    <property type="project" value="UniProtKB-UniRule"/>
</dbReference>
<dbReference type="GO" id="GO:0000287">
    <property type="term" value="F:magnesium ion binding"/>
    <property type="evidence" value="ECO:0007669"/>
    <property type="project" value="TreeGrafter"/>
</dbReference>
<dbReference type="GO" id="GO:0015940">
    <property type="term" value="P:pantothenate biosynthetic process"/>
    <property type="evidence" value="ECO:0007669"/>
    <property type="project" value="UniProtKB-UniRule"/>
</dbReference>
<dbReference type="CDD" id="cd06557">
    <property type="entry name" value="KPHMT-like"/>
    <property type="match status" value="1"/>
</dbReference>
<dbReference type="FunFam" id="3.20.20.60:FF:000017">
    <property type="entry name" value="3-methyl-2-oxobutanoate hydroxymethyltransferase"/>
    <property type="match status" value="1"/>
</dbReference>
<dbReference type="Gene3D" id="3.20.20.60">
    <property type="entry name" value="Phosphoenolpyruvate-binding domains"/>
    <property type="match status" value="1"/>
</dbReference>
<dbReference type="HAMAP" id="MF_00156">
    <property type="entry name" value="PanB"/>
    <property type="match status" value="1"/>
</dbReference>
<dbReference type="InterPro" id="IPR003700">
    <property type="entry name" value="Pantoate_hydroxy_MeTrfase"/>
</dbReference>
<dbReference type="InterPro" id="IPR015813">
    <property type="entry name" value="Pyrv/PenolPyrv_kinase-like_dom"/>
</dbReference>
<dbReference type="InterPro" id="IPR040442">
    <property type="entry name" value="Pyrv_kinase-like_dom_sf"/>
</dbReference>
<dbReference type="NCBIfam" id="TIGR00222">
    <property type="entry name" value="panB"/>
    <property type="match status" value="1"/>
</dbReference>
<dbReference type="NCBIfam" id="NF001452">
    <property type="entry name" value="PRK00311.1"/>
    <property type="match status" value="1"/>
</dbReference>
<dbReference type="PANTHER" id="PTHR20881">
    <property type="entry name" value="3-METHYL-2-OXOBUTANOATE HYDROXYMETHYLTRANSFERASE"/>
    <property type="match status" value="1"/>
</dbReference>
<dbReference type="PANTHER" id="PTHR20881:SF0">
    <property type="entry name" value="3-METHYL-2-OXOBUTANOATE HYDROXYMETHYLTRANSFERASE"/>
    <property type="match status" value="1"/>
</dbReference>
<dbReference type="Pfam" id="PF02548">
    <property type="entry name" value="Pantoate_transf"/>
    <property type="match status" value="1"/>
</dbReference>
<dbReference type="PIRSF" id="PIRSF000388">
    <property type="entry name" value="Pantoate_hydroxy_MeTrfase"/>
    <property type="match status" value="1"/>
</dbReference>
<dbReference type="SUPFAM" id="SSF51621">
    <property type="entry name" value="Phosphoenolpyruvate/pyruvate domain"/>
    <property type="match status" value="1"/>
</dbReference>
<comment type="function">
    <text evidence="1">Catalyzes the reversible reaction in which hydroxymethyl group from 5,10-methylenetetrahydrofolate is transferred onto alpha-ketoisovalerate to form ketopantoate.</text>
</comment>
<comment type="catalytic activity">
    <reaction evidence="1">
        <text>3-methyl-2-oxobutanoate + (6R)-5,10-methylene-5,6,7,8-tetrahydrofolate + H2O = 2-dehydropantoate + (6S)-5,6,7,8-tetrahydrofolate</text>
        <dbReference type="Rhea" id="RHEA:11824"/>
        <dbReference type="ChEBI" id="CHEBI:11561"/>
        <dbReference type="ChEBI" id="CHEBI:11851"/>
        <dbReference type="ChEBI" id="CHEBI:15377"/>
        <dbReference type="ChEBI" id="CHEBI:15636"/>
        <dbReference type="ChEBI" id="CHEBI:57453"/>
        <dbReference type="EC" id="2.1.2.11"/>
    </reaction>
</comment>
<comment type="cofactor">
    <cofactor evidence="1">
        <name>Mg(2+)</name>
        <dbReference type="ChEBI" id="CHEBI:18420"/>
    </cofactor>
    <text evidence="1">Binds 1 Mg(2+) ion per subunit.</text>
</comment>
<comment type="pathway">
    <text evidence="1">Cofactor biosynthesis; (R)-pantothenate biosynthesis; (R)-pantoate from 3-methyl-2-oxobutanoate: step 1/2.</text>
</comment>
<comment type="subunit">
    <text evidence="1">Homodecamer; pentamer of dimers.</text>
</comment>
<comment type="subcellular location">
    <subcellularLocation>
        <location evidence="1">Cytoplasm</location>
    </subcellularLocation>
</comment>
<comment type="similarity">
    <text evidence="1">Belongs to the PanB family.</text>
</comment>
<gene>
    <name evidence="1" type="primary">panB</name>
    <name type="ordered locus">CHU_3218</name>
</gene>
<accession>Q11Q55</accession>